<name>SYR_PROA2</name>
<keyword id="KW-0030">Aminoacyl-tRNA synthetase</keyword>
<keyword id="KW-0067">ATP-binding</keyword>
<keyword id="KW-0963">Cytoplasm</keyword>
<keyword id="KW-0436">Ligase</keyword>
<keyword id="KW-0547">Nucleotide-binding</keyword>
<keyword id="KW-0648">Protein biosynthesis</keyword>
<evidence type="ECO:0000255" key="1">
    <source>
        <dbReference type="HAMAP-Rule" id="MF_00123"/>
    </source>
</evidence>
<protein>
    <recommendedName>
        <fullName evidence="1">Arginine--tRNA ligase</fullName>
        <ecNumber evidence="1">6.1.1.19</ecNumber>
    </recommendedName>
    <alternativeName>
        <fullName evidence="1">Arginyl-tRNA synthetase</fullName>
        <shortName evidence="1">ArgRS</shortName>
    </alternativeName>
</protein>
<feature type="chain" id="PRO_1000095391" description="Arginine--tRNA ligase">
    <location>
        <begin position="1"/>
        <end position="551"/>
    </location>
</feature>
<feature type="short sequence motif" description="'HIGH' region">
    <location>
        <begin position="123"/>
        <end position="133"/>
    </location>
</feature>
<sequence length="551" mass="61934">MQEYLIASIQQALLASGIEPPKEITIEKPSNKQFGDFSTNIALTLAKECRKNPRQLAEEISAKLEFRPETVDKTTIAGPGFINFYLTPAFIMQSVEQVLNEGDQFGKTCTGKGQKAIVEYVSANPTGPLTIGRGRGGVLGDCIANLLESQGYKVTREYYFNDAGRQMTILAESVRLRYLECCGEAIAFPDTHYQGDYISDIAAKLFEKHGVELKEVSQLDEFKQIAETYIFASIKNTLHRLNIHHDSFFNEHKLYQTGQNGKSPNEQVIDALDKAGYISNYDGAVWFTTTKLGQEKDKVLIKSTGEPSYRLPDIAYHVTKYERAFSEIINVFGADHIDEYPDVIEALRILGYDPGRIKVAINQFVTTTVNGETVKMSTRKGNADLLDDLIDDVGADATRLFFIMRSKDSHLNFDVELAKKQSRDNPVFYLQYAHARICSLVKLAEQEIGFTQSDIGVHLMQNLDSPHELQLGLALLDFPEVISSAVRMLEPQKMVEYLHHVAELYHRFYQECPILKAEPDICKARLFLSLATRQVLQNGFRILGVTAPTAM</sequence>
<accession>B4S6D8</accession>
<proteinExistence type="inferred from homology"/>
<comment type="catalytic activity">
    <reaction evidence="1">
        <text>tRNA(Arg) + L-arginine + ATP = L-arginyl-tRNA(Arg) + AMP + diphosphate</text>
        <dbReference type="Rhea" id="RHEA:20301"/>
        <dbReference type="Rhea" id="RHEA-COMP:9658"/>
        <dbReference type="Rhea" id="RHEA-COMP:9673"/>
        <dbReference type="ChEBI" id="CHEBI:30616"/>
        <dbReference type="ChEBI" id="CHEBI:32682"/>
        <dbReference type="ChEBI" id="CHEBI:33019"/>
        <dbReference type="ChEBI" id="CHEBI:78442"/>
        <dbReference type="ChEBI" id="CHEBI:78513"/>
        <dbReference type="ChEBI" id="CHEBI:456215"/>
        <dbReference type="EC" id="6.1.1.19"/>
    </reaction>
</comment>
<comment type="subunit">
    <text evidence="1">Monomer.</text>
</comment>
<comment type="subcellular location">
    <subcellularLocation>
        <location evidence="1">Cytoplasm</location>
    </subcellularLocation>
</comment>
<comment type="similarity">
    <text evidence="1">Belongs to the class-I aminoacyl-tRNA synthetase family.</text>
</comment>
<organism>
    <name type="scientific">Prosthecochloris aestuarii (strain DSM 271 / SK 413)</name>
    <dbReference type="NCBI Taxonomy" id="290512"/>
    <lineage>
        <taxon>Bacteria</taxon>
        <taxon>Pseudomonadati</taxon>
        <taxon>Chlorobiota</taxon>
        <taxon>Chlorobiia</taxon>
        <taxon>Chlorobiales</taxon>
        <taxon>Chlorobiaceae</taxon>
        <taxon>Prosthecochloris</taxon>
    </lineage>
</organism>
<gene>
    <name evidence="1" type="primary">argS</name>
    <name type="ordered locus">Paes_2238</name>
</gene>
<dbReference type="EC" id="6.1.1.19" evidence="1"/>
<dbReference type="EMBL" id="CP001108">
    <property type="protein sequence ID" value="ACF47240.1"/>
    <property type="molecule type" value="Genomic_DNA"/>
</dbReference>
<dbReference type="RefSeq" id="WP_012506770.1">
    <property type="nucleotide sequence ID" value="NC_011059.1"/>
</dbReference>
<dbReference type="SMR" id="B4S6D8"/>
<dbReference type="STRING" id="290512.Paes_2238"/>
<dbReference type="KEGG" id="paa:Paes_2238"/>
<dbReference type="eggNOG" id="COG0018">
    <property type="taxonomic scope" value="Bacteria"/>
</dbReference>
<dbReference type="HOGENOM" id="CLU_006406_0_1_10"/>
<dbReference type="Proteomes" id="UP000002725">
    <property type="component" value="Chromosome"/>
</dbReference>
<dbReference type="GO" id="GO:0005737">
    <property type="term" value="C:cytoplasm"/>
    <property type="evidence" value="ECO:0007669"/>
    <property type="project" value="UniProtKB-SubCell"/>
</dbReference>
<dbReference type="GO" id="GO:0004814">
    <property type="term" value="F:arginine-tRNA ligase activity"/>
    <property type="evidence" value="ECO:0007669"/>
    <property type="project" value="UniProtKB-UniRule"/>
</dbReference>
<dbReference type="GO" id="GO:0005524">
    <property type="term" value="F:ATP binding"/>
    <property type="evidence" value="ECO:0007669"/>
    <property type="project" value="UniProtKB-UniRule"/>
</dbReference>
<dbReference type="GO" id="GO:0006420">
    <property type="term" value="P:arginyl-tRNA aminoacylation"/>
    <property type="evidence" value="ECO:0007669"/>
    <property type="project" value="UniProtKB-UniRule"/>
</dbReference>
<dbReference type="CDD" id="cd00671">
    <property type="entry name" value="ArgRS_core"/>
    <property type="match status" value="1"/>
</dbReference>
<dbReference type="FunFam" id="1.10.730.10:FF:000008">
    <property type="entry name" value="Arginine--tRNA ligase"/>
    <property type="match status" value="1"/>
</dbReference>
<dbReference type="Gene3D" id="3.30.1360.70">
    <property type="entry name" value="Arginyl tRNA synthetase N-terminal domain"/>
    <property type="match status" value="1"/>
</dbReference>
<dbReference type="Gene3D" id="3.40.50.620">
    <property type="entry name" value="HUPs"/>
    <property type="match status" value="1"/>
</dbReference>
<dbReference type="Gene3D" id="1.10.730.10">
    <property type="entry name" value="Isoleucyl-tRNA Synthetase, Domain 1"/>
    <property type="match status" value="1"/>
</dbReference>
<dbReference type="HAMAP" id="MF_00123">
    <property type="entry name" value="Arg_tRNA_synth"/>
    <property type="match status" value="1"/>
</dbReference>
<dbReference type="InterPro" id="IPR001278">
    <property type="entry name" value="Arg-tRNA-ligase"/>
</dbReference>
<dbReference type="InterPro" id="IPR005148">
    <property type="entry name" value="Arg-tRNA-synth_N"/>
</dbReference>
<dbReference type="InterPro" id="IPR036695">
    <property type="entry name" value="Arg-tRNA-synth_N_sf"/>
</dbReference>
<dbReference type="InterPro" id="IPR035684">
    <property type="entry name" value="ArgRS_core"/>
</dbReference>
<dbReference type="InterPro" id="IPR008909">
    <property type="entry name" value="DALR_anticod-bd"/>
</dbReference>
<dbReference type="InterPro" id="IPR014729">
    <property type="entry name" value="Rossmann-like_a/b/a_fold"/>
</dbReference>
<dbReference type="InterPro" id="IPR009080">
    <property type="entry name" value="tRNAsynth_Ia_anticodon-bd"/>
</dbReference>
<dbReference type="NCBIfam" id="TIGR00456">
    <property type="entry name" value="argS"/>
    <property type="match status" value="1"/>
</dbReference>
<dbReference type="PANTHER" id="PTHR11956:SF5">
    <property type="entry name" value="ARGININE--TRNA LIGASE, CYTOPLASMIC"/>
    <property type="match status" value="1"/>
</dbReference>
<dbReference type="PANTHER" id="PTHR11956">
    <property type="entry name" value="ARGINYL-TRNA SYNTHETASE"/>
    <property type="match status" value="1"/>
</dbReference>
<dbReference type="Pfam" id="PF03485">
    <property type="entry name" value="Arg_tRNA_synt_N"/>
    <property type="match status" value="1"/>
</dbReference>
<dbReference type="Pfam" id="PF05746">
    <property type="entry name" value="DALR_1"/>
    <property type="match status" value="1"/>
</dbReference>
<dbReference type="Pfam" id="PF00750">
    <property type="entry name" value="tRNA-synt_1d"/>
    <property type="match status" value="1"/>
</dbReference>
<dbReference type="PRINTS" id="PR01038">
    <property type="entry name" value="TRNASYNTHARG"/>
</dbReference>
<dbReference type="SMART" id="SM01016">
    <property type="entry name" value="Arg_tRNA_synt_N"/>
    <property type="match status" value="1"/>
</dbReference>
<dbReference type="SMART" id="SM00836">
    <property type="entry name" value="DALR_1"/>
    <property type="match status" value="1"/>
</dbReference>
<dbReference type="SUPFAM" id="SSF47323">
    <property type="entry name" value="Anticodon-binding domain of a subclass of class I aminoacyl-tRNA synthetases"/>
    <property type="match status" value="1"/>
</dbReference>
<dbReference type="SUPFAM" id="SSF55190">
    <property type="entry name" value="Arginyl-tRNA synthetase (ArgRS), N-terminal 'additional' domain"/>
    <property type="match status" value="1"/>
</dbReference>
<dbReference type="SUPFAM" id="SSF52374">
    <property type="entry name" value="Nucleotidylyl transferase"/>
    <property type="match status" value="1"/>
</dbReference>
<reference key="1">
    <citation type="submission" date="2008-06" db="EMBL/GenBank/DDBJ databases">
        <title>Complete sequence of chromosome of Prosthecochloris aestuarii DSM 271.</title>
        <authorList>
            <consortium name="US DOE Joint Genome Institute"/>
            <person name="Lucas S."/>
            <person name="Copeland A."/>
            <person name="Lapidus A."/>
            <person name="Glavina del Rio T."/>
            <person name="Dalin E."/>
            <person name="Tice H."/>
            <person name="Bruce D."/>
            <person name="Goodwin L."/>
            <person name="Pitluck S."/>
            <person name="Schmutz J."/>
            <person name="Larimer F."/>
            <person name="Land M."/>
            <person name="Hauser L."/>
            <person name="Kyrpides N."/>
            <person name="Anderson I."/>
            <person name="Liu Z."/>
            <person name="Li T."/>
            <person name="Zhao F."/>
            <person name="Overmann J."/>
            <person name="Bryant D.A."/>
            <person name="Richardson P."/>
        </authorList>
    </citation>
    <scope>NUCLEOTIDE SEQUENCE [LARGE SCALE GENOMIC DNA]</scope>
    <source>
        <strain>DSM 271 / SK 413</strain>
    </source>
</reference>